<accession>Q1LWZ0</accession>
<gene>
    <name type="primary">clxn</name>
    <name type="synonym">efcab1</name>
    <name type="synonym">si:ch211-173p18.9</name>
</gene>
<feature type="chain" id="PRO_0000453980" description="Calaxin">
    <location>
        <begin position="1"/>
        <end position="210"/>
    </location>
</feature>
<feature type="domain" description="EF-hand 1" evidence="5">
    <location>
        <begin position="64"/>
        <end position="99"/>
    </location>
</feature>
<feature type="domain" description="EF-hand 2" evidence="5">
    <location>
        <begin position="100"/>
        <end position="135"/>
    </location>
</feature>
<feature type="domain" description="EF-hand 3" evidence="5">
    <location>
        <begin position="145"/>
        <end position="180"/>
    </location>
</feature>
<feature type="binding site" evidence="6">
    <location>
        <position position="77"/>
    </location>
    <ligand>
        <name>Ca(2+)</name>
        <dbReference type="ChEBI" id="CHEBI:29108"/>
        <label>1</label>
    </ligand>
</feature>
<feature type="binding site" evidence="6">
    <location>
        <position position="79"/>
    </location>
    <ligand>
        <name>Ca(2+)</name>
        <dbReference type="ChEBI" id="CHEBI:29108"/>
        <label>1</label>
    </ligand>
</feature>
<feature type="binding site" evidence="6">
    <location>
        <position position="81"/>
    </location>
    <ligand>
        <name>Ca(2+)</name>
        <dbReference type="ChEBI" id="CHEBI:29108"/>
        <label>1</label>
    </ligand>
</feature>
<feature type="binding site" evidence="6">
    <location>
        <position position="83"/>
    </location>
    <ligand>
        <name>Ca(2+)</name>
        <dbReference type="ChEBI" id="CHEBI:29108"/>
        <label>1</label>
    </ligand>
</feature>
<feature type="binding site" evidence="6">
    <location>
        <position position="88"/>
    </location>
    <ligand>
        <name>Ca(2+)</name>
        <dbReference type="ChEBI" id="CHEBI:29108"/>
        <label>1</label>
    </ligand>
</feature>
<feature type="binding site" evidence="6">
    <location>
        <position position="113"/>
    </location>
    <ligand>
        <name>Ca(2+)</name>
        <dbReference type="ChEBI" id="CHEBI:29108"/>
        <label>2</label>
    </ligand>
</feature>
<feature type="binding site" evidence="6">
    <location>
        <position position="115"/>
    </location>
    <ligand>
        <name>Ca(2+)</name>
        <dbReference type="ChEBI" id="CHEBI:29108"/>
        <label>2</label>
    </ligand>
</feature>
<feature type="binding site" evidence="6">
    <location>
        <position position="117"/>
    </location>
    <ligand>
        <name>Ca(2+)</name>
        <dbReference type="ChEBI" id="CHEBI:29108"/>
        <label>2</label>
    </ligand>
</feature>
<feature type="binding site" evidence="6">
    <location>
        <position position="119"/>
    </location>
    <ligand>
        <name>Ca(2+)</name>
        <dbReference type="ChEBI" id="CHEBI:29108"/>
        <label>2</label>
    </ligand>
</feature>
<feature type="binding site" evidence="6">
    <location>
        <position position="124"/>
    </location>
    <ligand>
        <name>Ca(2+)</name>
        <dbReference type="ChEBI" id="CHEBI:29108"/>
        <label>2</label>
    </ligand>
</feature>
<feature type="binding site" evidence="6">
    <location>
        <position position="158"/>
    </location>
    <ligand>
        <name>Ca(2+)</name>
        <dbReference type="ChEBI" id="CHEBI:29108"/>
        <label>3</label>
    </ligand>
</feature>
<feature type="binding site" evidence="6">
    <location>
        <position position="160"/>
    </location>
    <ligand>
        <name>Ca(2+)</name>
        <dbReference type="ChEBI" id="CHEBI:29108"/>
        <label>3</label>
    </ligand>
</feature>
<feature type="binding site" evidence="6">
    <location>
        <position position="162"/>
    </location>
    <ligand>
        <name>Ca(2+)</name>
        <dbReference type="ChEBI" id="CHEBI:29108"/>
        <label>3</label>
    </ligand>
</feature>
<feature type="binding site" evidence="6">
    <location>
        <position position="164"/>
    </location>
    <ligand>
        <name>Ca(2+)</name>
        <dbReference type="ChEBI" id="CHEBI:29108"/>
        <label>3</label>
    </ligand>
</feature>
<feature type="binding site" evidence="6">
    <location>
        <position position="169"/>
    </location>
    <ligand>
        <name>Ca(2+)</name>
        <dbReference type="ChEBI" id="CHEBI:29108"/>
        <label>3</label>
    </ligand>
</feature>
<keyword id="KW-0106">Calcium</keyword>
<keyword id="KW-0966">Cell projection</keyword>
<keyword id="KW-0969">Cilium</keyword>
<keyword id="KW-0963">Cytoplasm</keyword>
<keyword id="KW-0206">Cytoskeleton</keyword>
<keyword id="KW-0282">Flagellum</keyword>
<keyword id="KW-0479">Metal-binding</keyword>
<keyword id="KW-1185">Reference proteome</keyword>
<keyword id="KW-0677">Repeat</keyword>
<sequence length="210" mass="24535">MNRKLIQNLAETLCRQVKHFNKTETECLIRLFNSLLGEQAERKTTIGVDRAKFRNILHHTFGMTDDMMTDRVCRVIDKDNDGYLSVKEWVEALSVFLRGTLDEKMKYCFEVYDLNGDGYISREEMFQMLKDSLIRQPTEEDPDEGIKDIVEIALKKMDYDHDGRVSYADFEKTVMDENLLLEAFGNCLPDAKSVLAFEQQAFQKHEHCKE</sequence>
<proteinExistence type="evidence at transcript level"/>
<dbReference type="EMBL" id="BX510986">
    <property type="status" value="NOT_ANNOTATED_CDS"/>
    <property type="molecule type" value="Genomic_DNA"/>
</dbReference>
<dbReference type="EMBL" id="BC171473">
    <property type="protein sequence ID" value="AAI71473.1"/>
    <property type="status" value="ALT_INIT"/>
    <property type="molecule type" value="mRNA"/>
</dbReference>
<dbReference type="EMBL" id="BC171475">
    <property type="protein sequence ID" value="AAI71475.1"/>
    <property type="status" value="ALT_INIT"/>
    <property type="molecule type" value="mRNA"/>
</dbReference>
<dbReference type="RefSeq" id="NP_001038325.1">
    <property type="nucleotide sequence ID" value="NM_001044860.1"/>
</dbReference>
<dbReference type="SMR" id="Q1LWZ0"/>
<dbReference type="FunCoup" id="Q1LWZ0">
    <property type="interactions" value="829"/>
</dbReference>
<dbReference type="STRING" id="7955.ENSDARP00000081908"/>
<dbReference type="PaxDb" id="7955-ENSDARP00000081908"/>
<dbReference type="GeneID" id="558421"/>
<dbReference type="KEGG" id="dre:558421"/>
<dbReference type="AGR" id="ZFIN:ZDB-GENE-040914-40"/>
<dbReference type="CTD" id="79645"/>
<dbReference type="ZFIN" id="ZDB-GENE-040914-40">
    <property type="gene designation" value="clxn"/>
</dbReference>
<dbReference type="eggNOG" id="KOG0044">
    <property type="taxonomic scope" value="Eukaryota"/>
</dbReference>
<dbReference type="HOGENOM" id="CLU_061288_3_2_1"/>
<dbReference type="InParanoid" id="Q1LWZ0"/>
<dbReference type="OrthoDB" id="191686at2759"/>
<dbReference type="PhylomeDB" id="Q1LWZ0"/>
<dbReference type="TreeFam" id="TF323358"/>
<dbReference type="PRO" id="PR:Q1LWZ0"/>
<dbReference type="Proteomes" id="UP000000437">
    <property type="component" value="Chromosome 19"/>
</dbReference>
<dbReference type="Bgee" id="ENSDARG00000061377">
    <property type="expression patterns" value="Expressed in testis and 18 other cell types or tissues"/>
</dbReference>
<dbReference type="ExpressionAtlas" id="Q1LWZ0">
    <property type="expression patterns" value="baseline and differential"/>
</dbReference>
<dbReference type="GO" id="GO:0005929">
    <property type="term" value="C:cilium"/>
    <property type="evidence" value="ECO:0000250"/>
    <property type="project" value="UniProtKB"/>
</dbReference>
<dbReference type="GO" id="GO:0005737">
    <property type="term" value="C:cytoplasm"/>
    <property type="evidence" value="ECO:0007669"/>
    <property type="project" value="UniProtKB-KW"/>
</dbReference>
<dbReference type="GO" id="GO:0005856">
    <property type="term" value="C:cytoskeleton"/>
    <property type="evidence" value="ECO:0007669"/>
    <property type="project" value="UniProtKB-KW"/>
</dbReference>
<dbReference type="GO" id="GO:0036126">
    <property type="term" value="C:sperm flagellum"/>
    <property type="evidence" value="ECO:0000250"/>
    <property type="project" value="UniProtKB"/>
</dbReference>
<dbReference type="GO" id="GO:0005509">
    <property type="term" value="F:calcium ion binding"/>
    <property type="evidence" value="ECO:0000318"/>
    <property type="project" value="GO_Central"/>
</dbReference>
<dbReference type="GO" id="GO:0003341">
    <property type="term" value="P:cilium movement"/>
    <property type="evidence" value="ECO:0000250"/>
    <property type="project" value="UniProtKB"/>
</dbReference>
<dbReference type="GO" id="GO:0036158">
    <property type="term" value="P:outer dynein arm assembly"/>
    <property type="evidence" value="ECO:0000250"/>
    <property type="project" value="UniProtKB"/>
</dbReference>
<dbReference type="GO" id="GO:0009966">
    <property type="term" value="P:regulation of signal transduction"/>
    <property type="evidence" value="ECO:0000318"/>
    <property type="project" value="GO_Central"/>
</dbReference>
<dbReference type="CDD" id="cd00051">
    <property type="entry name" value="EFh"/>
    <property type="match status" value="2"/>
</dbReference>
<dbReference type="Gene3D" id="1.10.238.10">
    <property type="entry name" value="EF-hand"/>
    <property type="match status" value="1"/>
</dbReference>
<dbReference type="InterPro" id="IPR011992">
    <property type="entry name" value="EF-hand-dom_pair"/>
</dbReference>
<dbReference type="InterPro" id="IPR018247">
    <property type="entry name" value="EF_Hand_1_Ca_BS"/>
</dbReference>
<dbReference type="InterPro" id="IPR002048">
    <property type="entry name" value="EF_hand_dom"/>
</dbReference>
<dbReference type="InterPro" id="IPR028846">
    <property type="entry name" value="Recoverin"/>
</dbReference>
<dbReference type="PANTHER" id="PTHR23055:SF60">
    <property type="entry name" value="CALAXIN"/>
    <property type="match status" value="1"/>
</dbReference>
<dbReference type="PANTHER" id="PTHR23055">
    <property type="entry name" value="CALCIUM BINDING PROTEINS"/>
    <property type="match status" value="1"/>
</dbReference>
<dbReference type="Pfam" id="PF13202">
    <property type="entry name" value="EF-hand_5"/>
    <property type="match status" value="1"/>
</dbReference>
<dbReference type="Pfam" id="PF13499">
    <property type="entry name" value="EF-hand_7"/>
    <property type="match status" value="1"/>
</dbReference>
<dbReference type="SMART" id="SM00054">
    <property type="entry name" value="EFh"/>
    <property type="match status" value="3"/>
</dbReference>
<dbReference type="SUPFAM" id="SSF47473">
    <property type="entry name" value="EF-hand"/>
    <property type="match status" value="1"/>
</dbReference>
<dbReference type="PROSITE" id="PS00018">
    <property type="entry name" value="EF_HAND_1"/>
    <property type="match status" value="3"/>
</dbReference>
<dbReference type="PROSITE" id="PS50222">
    <property type="entry name" value="EF_HAND_2"/>
    <property type="match status" value="3"/>
</dbReference>
<organism>
    <name type="scientific">Danio rerio</name>
    <name type="common">Zebrafish</name>
    <name type="synonym">Brachydanio rerio</name>
    <dbReference type="NCBI Taxonomy" id="7955"/>
    <lineage>
        <taxon>Eukaryota</taxon>
        <taxon>Metazoa</taxon>
        <taxon>Chordata</taxon>
        <taxon>Craniata</taxon>
        <taxon>Vertebrata</taxon>
        <taxon>Euteleostomi</taxon>
        <taxon>Actinopterygii</taxon>
        <taxon>Neopterygii</taxon>
        <taxon>Teleostei</taxon>
        <taxon>Ostariophysi</taxon>
        <taxon>Cypriniformes</taxon>
        <taxon>Danionidae</taxon>
        <taxon>Danioninae</taxon>
        <taxon>Danio</taxon>
    </lineage>
</organism>
<comment type="function">
    <text evidence="1 7">Component of the outer dynein arm-docking complex (ODA-DC) that mediates outer dynein arms (ODA) binding onto the doublet microtubule. Seems to regulate the assembly of both ODAs and their axonemal docking complex onto ciliary microtubules (By similarity). Regulates ciliary and flagellar motility and is required for cilia-driven determination of body laterality (PubMed:31240264).</text>
</comment>
<comment type="function">
    <text evidence="7">Regulates ciliary motility and is required for cilia-driven determination of body laterality.</text>
</comment>
<comment type="subunit">
    <text evidence="1">Component of the outer dynein arm-docking complex along with ODAD1, ODAD2, ODAD3 and ODAD4.</text>
</comment>
<comment type="subcellular location">
    <subcellularLocation>
        <location evidence="2">Cytoplasm</location>
        <location evidence="2">Cytoskeleton</location>
        <location evidence="2">Cilium axoneme</location>
    </subcellularLocation>
    <subcellularLocation>
        <location evidence="4">Cell projection</location>
        <location evidence="4">Cilium</location>
    </subcellularLocation>
    <subcellularLocation>
        <location evidence="4">Cell projection</location>
        <location evidence="4">Cilium</location>
        <location evidence="4">Flagellum</location>
    </subcellularLocation>
</comment>
<comment type="disruption phenotype">
    <text evidence="7">Knockout mutants show situs invertus but normal formation of Kupffer's vesicle (KV) cilia (PubMed:31240264). However, many of the KV cilia in the mutant beat with an irregular cycle in contrast to the smooth rotary movement in wild-type fish (PubMed:31240264).</text>
</comment>
<comment type="sequence caution" evidence="8">
    <conflict type="erroneous initiation">
        <sequence resource="EMBL-CDS" id="AAI71473"/>
    </conflict>
    <text>Truncated N-terminus.</text>
</comment>
<comment type="sequence caution" evidence="8">
    <conflict type="erroneous initiation">
        <sequence resource="EMBL-CDS" id="AAI71475"/>
    </conflict>
    <text>Truncated N-terminus.</text>
</comment>
<name>CLXN_DANRE</name>
<evidence type="ECO:0000250" key="1">
    <source>
        <dbReference type="UniProtKB" id="Q32L26"/>
    </source>
</evidence>
<evidence type="ECO:0000250" key="2">
    <source>
        <dbReference type="UniProtKB" id="Q96M63"/>
    </source>
</evidence>
<evidence type="ECO:0000250" key="3">
    <source>
        <dbReference type="UniProtKB" id="Q9D3N2"/>
    </source>
</evidence>
<evidence type="ECO:0000250" key="4">
    <source>
        <dbReference type="UniProtKB" id="Q9HAE3"/>
    </source>
</evidence>
<evidence type="ECO:0000255" key="5">
    <source>
        <dbReference type="PROSITE-ProRule" id="PRU00448"/>
    </source>
</evidence>
<evidence type="ECO:0000255" key="6">
    <source>
        <dbReference type="PROSITE-ProRule" id="PRU10142"/>
    </source>
</evidence>
<evidence type="ECO:0000269" key="7">
    <source>
    </source>
</evidence>
<evidence type="ECO:0000305" key="8"/>
<reference key="1">
    <citation type="journal article" date="2013" name="Nature">
        <title>The zebrafish reference genome sequence and its relationship to the human genome.</title>
        <authorList>
            <person name="Howe K."/>
            <person name="Clark M.D."/>
            <person name="Torroja C.F."/>
            <person name="Torrance J."/>
            <person name="Berthelot C."/>
            <person name="Muffato M."/>
            <person name="Collins J.E."/>
            <person name="Humphray S."/>
            <person name="McLaren K."/>
            <person name="Matthews L."/>
            <person name="McLaren S."/>
            <person name="Sealy I."/>
            <person name="Caccamo M."/>
            <person name="Churcher C."/>
            <person name="Scott C."/>
            <person name="Barrett J.C."/>
            <person name="Koch R."/>
            <person name="Rauch G.J."/>
            <person name="White S."/>
            <person name="Chow W."/>
            <person name="Kilian B."/>
            <person name="Quintais L.T."/>
            <person name="Guerra-Assuncao J.A."/>
            <person name="Zhou Y."/>
            <person name="Gu Y."/>
            <person name="Yen J."/>
            <person name="Vogel J.H."/>
            <person name="Eyre T."/>
            <person name="Redmond S."/>
            <person name="Banerjee R."/>
            <person name="Chi J."/>
            <person name="Fu B."/>
            <person name="Langley E."/>
            <person name="Maguire S.F."/>
            <person name="Laird G.K."/>
            <person name="Lloyd D."/>
            <person name="Kenyon E."/>
            <person name="Donaldson S."/>
            <person name="Sehra H."/>
            <person name="Almeida-King J."/>
            <person name="Loveland J."/>
            <person name="Trevanion S."/>
            <person name="Jones M."/>
            <person name="Quail M."/>
            <person name="Willey D."/>
            <person name="Hunt A."/>
            <person name="Burton J."/>
            <person name="Sims S."/>
            <person name="McLay K."/>
            <person name="Plumb B."/>
            <person name="Davis J."/>
            <person name="Clee C."/>
            <person name="Oliver K."/>
            <person name="Clark R."/>
            <person name="Riddle C."/>
            <person name="Elliot D."/>
            <person name="Threadgold G."/>
            <person name="Harden G."/>
            <person name="Ware D."/>
            <person name="Begum S."/>
            <person name="Mortimore B."/>
            <person name="Kerry G."/>
            <person name="Heath P."/>
            <person name="Phillimore B."/>
            <person name="Tracey A."/>
            <person name="Corby N."/>
            <person name="Dunn M."/>
            <person name="Johnson C."/>
            <person name="Wood J."/>
            <person name="Clark S."/>
            <person name="Pelan S."/>
            <person name="Griffiths G."/>
            <person name="Smith M."/>
            <person name="Glithero R."/>
            <person name="Howden P."/>
            <person name="Barker N."/>
            <person name="Lloyd C."/>
            <person name="Stevens C."/>
            <person name="Harley J."/>
            <person name="Holt K."/>
            <person name="Panagiotidis G."/>
            <person name="Lovell J."/>
            <person name="Beasley H."/>
            <person name="Henderson C."/>
            <person name="Gordon D."/>
            <person name="Auger K."/>
            <person name="Wright D."/>
            <person name="Collins J."/>
            <person name="Raisen C."/>
            <person name="Dyer L."/>
            <person name="Leung K."/>
            <person name="Robertson L."/>
            <person name="Ambridge K."/>
            <person name="Leongamornlert D."/>
            <person name="McGuire S."/>
            <person name="Gilderthorp R."/>
            <person name="Griffiths C."/>
            <person name="Manthravadi D."/>
            <person name="Nichol S."/>
            <person name="Barker G."/>
            <person name="Whitehead S."/>
            <person name="Kay M."/>
            <person name="Brown J."/>
            <person name="Murnane C."/>
            <person name="Gray E."/>
            <person name="Humphries M."/>
            <person name="Sycamore N."/>
            <person name="Barker D."/>
            <person name="Saunders D."/>
            <person name="Wallis J."/>
            <person name="Babbage A."/>
            <person name="Hammond S."/>
            <person name="Mashreghi-Mohammadi M."/>
            <person name="Barr L."/>
            <person name="Martin S."/>
            <person name="Wray P."/>
            <person name="Ellington A."/>
            <person name="Matthews N."/>
            <person name="Ellwood M."/>
            <person name="Woodmansey R."/>
            <person name="Clark G."/>
            <person name="Cooper J."/>
            <person name="Tromans A."/>
            <person name="Grafham D."/>
            <person name="Skuce C."/>
            <person name="Pandian R."/>
            <person name="Andrews R."/>
            <person name="Harrison E."/>
            <person name="Kimberley A."/>
            <person name="Garnett J."/>
            <person name="Fosker N."/>
            <person name="Hall R."/>
            <person name="Garner P."/>
            <person name="Kelly D."/>
            <person name="Bird C."/>
            <person name="Palmer S."/>
            <person name="Gehring I."/>
            <person name="Berger A."/>
            <person name="Dooley C.M."/>
            <person name="Ersan-Urun Z."/>
            <person name="Eser C."/>
            <person name="Geiger H."/>
            <person name="Geisler M."/>
            <person name="Karotki L."/>
            <person name="Kirn A."/>
            <person name="Konantz J."/>
            <person name="Konantz M."/>
            <person name="Oberlander M."/>
            <person name="Rudolph-Geiger S."/>
            <person name="Teucke M."/>
            <person name="Lanz C."/>
            <person name="Raddatz G."/>
            <person name="Osoegawa K."/>
            <person name="Zhu B."/>
            <person name="Rapp A."/>
            <person name="Widaa S."/>
            <person name="Langford C."/>
            <person name="Yang F."/>
            <person name="Schuster S.C."/>
            <person name="Carter N.P."/>
            <person name="Harrow J."/>
            <person name="Ning Z."/>
            <person name="Herrero J."/>
            <person name="Searle S.M."/>
            <person name="Enright A."/>
            <person name="Geisler R."/>
            <person name="Plasterk R.H."/>
            <person name="Lee C."/>
            <person name="Westerfield M."/>
            <person name="de Jong P.J."/>
            <person name="Zon L.I."/>
            <person name="Postlethwait J.H."/>
            <person name="Nusslein-Volhard C."/>
            <person name="Hubbard T.J."/>
            <person name="Roest Crollius H."/>
            <person name="Rogers J."/>
            <person name="Stemple D.L."/>
        </authorList>
    </citation>
    <scope>NUCLEOTIDE SEQUENCE [LARGE SCALE GENOMIC DNA]</scope>
    <source>
        <strain>Tuebingen</strain>
    </source>
</reference>
<reference key="2">
    <citation type="submission" date="2008-11" db="EMBL/GenBank/DDBJ databases">
        <authorList>
            <consortium name="NIH - Zebrafish Gene Collection (ZGC) project"/>
        </authorList>
    </citation>
    <scope>NUCLEOTIDE SEQUENCE [LARGE SCALE MRNA]</scope>
</reference>
<reference key="3">
    <citation type="journal article" date="2019" name="Commun. Biol.">
        <title>Calaxin is required for cilia-driven determination of vertebrate laterality.</title>
        <authorList>
            <person name="Sasaki K."/>
            <person name="Shiba K."/>
            <person name="Nakamura A."/>
            <person name="Kawano N."/>
            <person name="Satouh Y."/>
            <person name="Yamaguchi H."/>
            <person name="Morikawa M."/>
            <person name="Shibata D."/>
            <person name="Yanase R."/>
            <person name="Jokura K."/>
            <person name="Nomura M."/>
            <person name="Miyado M."/>
            <person name="Takada S."/>
            <person name="Ueno H."/>
            <person name="Nonaka S."/>
            <person name="Baba T."/>
            <person name="Ikawa M."/>
            <person name="Kikkawa M."/>
            <person name="Miyado K."/>
            <person name="Inaba K."/>
        </authorList>
    </citation>
    <scope>FUNCTION</scope>
    <scope>DISRUPTION PHENOTYPE</scope>
</reference>
<protein>
    <recommendedName>
        <fullName evidence="3">Calaxin</fullName>
    </recommendedName>
    <alternativeName>
        <fullName>EF-hand calcium-binding domain-containing protein 1</fullName>
    </alternativeName>
</protein>